<accession>Q8CVI1</accession>
<organism>
    <name type="scientific">Escherichia coli O6:H1 (strain CFT073 / ATCC 700928 / UPEC)</name>
    <dbReference type="NCBI Taxonomy" id="199310"/>
    <lineage>
        <taxon>Bacteria</taxon>
        <taxon>Pseudomonadati</taxon>
        <taxon>Pseudomonadota</taxon>
        <taxon>Gammaproteobacteria</taxon>
        <taxon>Enterobacterales</taxon>
        <taxon>Enterobacteriaceae</taxon>
        <taxon>Escherichia</taxon>
    </lineage>
</organism>
<feature type="signal peptide" evidence="1">
    <location>
        <begin position="1"/>
        <end position="26"/>
    </location>
</feature>
<feature type="chain" id="PRO_0000268964" description="Cytochrome c-552">
    <location>
        <begin position="27"/>
        <end position="478"/>
    </location>
</feature>
<feature type="binding site" description="axial binding residue" evidence="1">
    <location>
        <position position="94"/>
    </location>
    <ligand>
        <name>heme c</name>
        <dbReference type="ChEBI" id="CHEBI:61717"/>
        <label>3</label>
    </ligand>
    <ligandPart>
        <name>Fe</name>
        <dbReference type="ChEBI" id="CHEBI:18248"/>
    </ligandPart>
</feature>
<feature type="binding site" description="covalent" evidence="1">
    <location>
        <position position="122"/>
    </location>
    <ligand>
        <name>heme</name>
        <dbReference type="ChEBI" id="CHEBI:30413"/>
        <label>1</label>
    </ligand>
</feature>
<feature type="binding site" description="covalent" evidence="1">
    <location>
        <position position="125"/>
    </location>
    <ligand>
        <name>heme</name>
        <dbReference type="ChEBI" id="CHEBI:30413"/>
        <label>1</label>
    </ligand>
</feature>
<feature type="binding site" description="axial binding residue" evidence="1">
    <location>
        <position position="126"/>
    </location>
    <ligand>
        <name>heme</name>
        <dbReference type="ChEBI" id="CHEBI:30413"/>
        <label>1</label>
    </ligand>
    <ligandPart>
        <name>Fe</name>
        <dbReference type="ChEBI" id="CHEBI:18248"/>
    </ligandPart>
</feature>
<feature type="binding site" description="covalent" evidence="1">
    <location>
        <position position="160"/>
    </location>
    <ligand>
        <name>heme c</name>
        <dbReference type="ChEBI" id="CHEBI:61717"/>
        <label>2</label>
    </ligand>
</feature>
<feature type="binding site" description="covalent" evidence="1">
    <location>
        <position position="163"/>
    </location>
    <ligand>
        <name>heme c</name>
        <dbReference type="ChEBI" id="CHEBI:61717"/>
        <label>2</label>
    </ligand>
</feature>
<feature type="binding site" description="axial binding residue" evidence="1">
    <location>
        <position position="164"/>
    </location>
    <ligand>
        <name>heme c</name>
        <dbReference type="ChEBI" id="CHEBI:61717"/>
        <label>2</label>
    </ligand>
    <ligandPart>
        <name>Fe</name>
        <dbReference type="ChEBI" id="CHEBI:18248"/>
    </ligandPart>
</feature>
<feature type="binding site" description="covalent" evidence="1">
    <location>
        <position position="209"/>
    </location>
    <ligand>
        <name>heme c</name>
        <dbReference type="ChEBI" id="CHEBI:61717"/>
        <label>3</label>
    </ligand>
</feature>
<feature type="binding site" description="covalent" evidence="1">
    <location>
        <position position="212"/>
    </location>
    <ligand>
        <name>heme c</name>
        <dbReference type="ChEBI" id="CHEBI:61717"/>
        <label>3</label>
    </ligand>
</feature>
<feature type="binding site" description="axial binding residue" evidence="1">
    <location>
        <position position="213"/>
    </location>
    <ligand>
        <name>heme c</name>
        <dbReference type="ChEBI" id="CHEBI:61717"/>
        <label>3</label>
    </ligand>
    <ligandPart>
        <name>Fe</name>
        <dbReference type="ChEBI" id="CHEBI:18248"/>
    </ligandPart>
</feature>
<feature type="binding site" evidence="1">
    <location>
        <position position="215"/>
    </location>
    <ligand>
        <name>Ca(2+)</name>
        <dbReference type="ChEBI" id="CHEBI:29108"/>
    </ligand>
</feature>
<feature type="binding site" evidence="1">
    <location>
        <position position="216"/>
    </location>
    <ligand>
        <name>Ca(2+)</name>
        <dbReference type="ChEBI" id="CHEBI:29108"/>
    </ligand>
</feature>
<feature type="binding site" evidence="1">
    <location>
        <position position="216"/>
    </location>
    <ligand>
        <name>substrate</name>
    </ligand>
</feature>
<feature type="binding site" evidence="1">
    <location>
        <position position="261"/>
    </location>
    <ligand>
        <name>Ca(2+)</name>
        <dbReference type="ChEBI" id="CHEBI:29108"/>
    </ligand>
</feature>
<feature type="binding site" evidence="1">
    <location>
        <position position="263"/>
    </location>
    <ligand>
        <name>Ca(2+)</name>
        <dbReference type="ChEBI" id="CHEBI:29108"/>
    </ligand>
</feature>
<feature type="binding site" evidence="1">
    <location>
        <position position="264"/>
    </location>
    <ligand>
        <name>substrate</name>
    </ligand>
</feature>
<feature type="binding site" description="axial binding residue" evidence="1">
    <location>
        <position position="275"/>
    </location>
    <ligand>
        <name>heme c</name>
        <dbReference type="ChEBI" id="CHEBI:61717"/>
        <label>5</label>
    </ligand>
    <ligandPart>
        <name>Fe</name>
        <dbReference type="ChEBI" id="CHEBI:18248"/>
    </ligandPart>
</feature>
<feature type="binding site" description="covalent" evidence="1">
    <location>
        <position position="282"/>
    </location>
    <ligand>
        <name>heme c</name>
        <dbReference type="ChEBI" id="CHEBI:61717"/>
        <label>4</label>
    </ligand>
</feature>
<feature type="binding site" description="covalent" evidence="1">
    <location>
        <position position="285"/>
    </location>
    <ligand>
        <name>heme c</name>
        <dbReference type="ChEBI" id="CHEBI:61717"/>
        <label>4</label>
    </ligand>
</feature>
<feature type="binding site" description="axial binding residue" evidence="1">
    <location>
        <position position="286"/>
    </location>
    <ligand>
        <name>heme c</name>
        <dbReference type="ChEBI" id="CHEBI:61717"/>
        <label>4</label>
    </ligand>
    <ligandPart>
        <name>Fe</name>
        <dbReference type="ChEBI" id="CHEBI:18248"/>
    </ligandPart>
</feature>
<feature type="binding site" description="axial binding residue" evidence="1">
    <location>
        <position position="301"/>
    </location>
    <ligand>
        <name>heme c</name>
        <dbReference type="ChEBI" id="CHEBI:61717"/>
        <label>2</label>
    </ligand>
    <ligandPart>
        <name>Fe</name>
        <dbReference type="ChEBI" id="CHEBI:18248"/>
    </ligandPart>
</feature>
<feature type="binding site" description="covalent" evidence="1">
    <location>
        <position position="314"/>
    </location>
    <ligand>
        <name>heme c</name>
        <dbReference type="ChEBI" id="CHEBI:61717"/>
        <label>5</label>
    </ligand>
</feature>
<feature type="binding site" description="covalent" evidence="1">
    <location>
        <position position="317"/>
    </location>
    <ligand>
        <name>heme c</name>
        <dbReference type="ChEBI" id="CHEBI:61717"/>
        <label>5</label>
    </ligand>
</feature>
<feature type="binding site" description="axial binding residue" evidence="1">
    <location>
        <position position="318"/>
    </location>
    <ligand>
        <name>heme c</name>
        <dbReference type="ChEBI" id="CHEBI:61717"/>
        <label>5</label>
    </ligand>
    <ligandPart>
        <name>Fe</name>
        <dbReference type="ChEBI" id="CHEBI:18248"/>
    </ligandPart>
</feature>
<feature type="binding site" description="axial binding residue" evidence="1">
    <location>
        <position position="393"/>
    </location>
    <ligand>
        <name>heme c</name>
        <dbReference type="ChEBI" id="CHEBI:61717"/>
        <label>4</label>
    </ligand>
    <ligandPart>
        <name>Fe</name>
        <dbReference type="ChEBI" id="CHEBI:18248"/>
    </ligandPart>
</feature>
<name>NRFA_ECOL6</name>
<reference key="1">
    <citation type="journal article" date="2002" name="Proc. Natl. Acad. Sci. U.S.A.">
        <title>Extensive mosaic structure revealed by the complete genome sequence of uropathogenic Escherichia coli.</title>
        <authorList>
            <person name="Welch R.A."/>
            <person name="Burland V."/>
            <person name="Plunkett G. III"/>
            <person name="Redford P."/>
            <person name="Roesch P."/>
            <person name="Rasko D."/>
            <person name="Buckles E.L."/>
            <person name="Liou S.-R."/>
            <person name="Boutin A."/>
            <person name="Hackett J."/>
            <person name="Stroud D."/>
            <person name="Mayhew G.F."/>
            <person name="Rose D.J."/>
            <person name="Zhou S."/>
            <person name="Schwartz D.C."/>
            <person name="Perna N.T."/>
            <person name="Mobley H.L.T."/>
            <person name="Donnenberg M.S."/>
            <person name="Blattner F.R."/>
        </authorList>
    </citation>
    <scope>NUCLEOTIDE SEQUENCE [LARGE SCALE GENOMIC DNA]</scope>
    <source>
        <strain>CFT073 / ATCC 700928 / UPEC</strain>
    </source>
</reference>
<gene>
    <name evidence="1" type="primary">nrfA</name>
    <name type="ordered locus">c5066</name>
</gene>
<keyword id="KW-0106">Calcium</keyword>
<keyword id="KW-0249">Electron transport</keyword>
<keyword id="KW-0349">Heme</keyword>
<keyword id="KW-0408">Iron</keyword>
<keyword id="KW-0479">Metal-binding</keyword>
<keyword id="KW-0560">Oxidoreductase</keyword>
<keyword id="KW-0574">Periplasm</keyword>
<keyword id="KW-1185">Reference proteome</keyword>
<keyword id="KW-0732">Signal</keyword>
<keyword id="KW-0813">Transport</keyword>
<evidence type="ECO:0000255" key="1">
    <source>
        <dbReference type="HAMAP-Rule" id="MF_01182"/>
    </source>
</evidence>
<dbReference type="EC" id="1.7.2.2" evidence="1"/>
<dbReference type="EMBL" id="AE014075">
    <property type="protein sequence ID" value="AAN83492.1"/>
    <property type="molecule type" value="Genomic_DNA"/>
</dbReference>
<dbReference type="RefSeq" id="WP_000196879.1">
    <property type="nucleotide sequence ID" value="NZ_CP051263.1"/>
</dbReference>
<dbReference type="SMR" id="Q8CVI1"/>
<dbReference type="STRING" id="199310.c5066"/>
<dbReference type="KEGG" id="ecc:c5066"/>
<dbReference type="eggNOG" id="COG3303">
    <property type="taxonomic scope" value="Bacteria"/>
</dbReference>
<dbReference type="HOGENOM" id="CLU_035040_1_0_6"/>
<dbReference type="BioCyc" id="ECOL199310:C5066-MONOMER"/>
<dbReference type="UniPathway" id="UPA00653"/>
<dbReference type="Proteomes" id="UP000001410">
    <property type="component" value="Chromosome"/>
</dbReference>
<dbReference type="GO" id="GO:0030288">
    <property type="term" value="C:outer membrane-bounded periplasmic space"/>
    <property type="evidence" value="ECO:0007669"/>
    <property type="project" value="TreeGrafter"/>
</dbReference>
<dbReference type="GO" id="GO:0005509">
    <property type="term" value="F:calcium ion binding"/>
    <property type="evidence" value="ECO:0007669"/>
    <property type="project" value="UniProtKB-UniRule"/>
</dbReference>
<dbReference type="GO" id="GO:0020037">
    <property type="term" value="F:heme binding"/>
    <property type="evidence" value="ECO:0007669"/>
    <property type="project" value="InterPro"/>
</dbReference>
<dbReference type="GO" id="GO:0005506">
    <property type="term" value="F:iron ion binding"/>
    <property type="evidence" value="ECO:0007669"/>
    <property type="project" value="UniProtKB-UniRule"/>
</dbReference>
<dbReference type="GO" id="GO:0042279">
    <property type="term" value="F:nitrite reductase (cytochrome, ammonia-forming) activity"/>
    <property type="evidence" value="ECO:0007669"/>
    <property type="project" value="UniProtKB-UniRule"/>
</dbReference>
<dbReference type="GO" id="GO:0019645">
    <property type="term" value="P:anaerobic electron transport chain"/>
    <property type="evidence" value="ECO:0007669"/>
    <property type="project" value="TreeGrafter"/>
</dbReference>
<dbReference type="GO" id="GO:0042128">
    <property type="term" value="P:nitrate assimilation"/>
    <property type="evidence" value="ECO:0007669"/>
    <property type="project" value="UniProtKB-UniRule"/>
</dbReference>
<dbReference type="CDD" id="cd00548">
    <property type="entry name" value="NrfA-like"/>
    <property type="match status" value="1"/>
</dbReference>
<dbReference type="FunFam" id="1.10.1130.10:FF:000002">
    <property type="entry name" value="Cytochrome c-552"/>
    <property type="match status" value="1"/>
</dbReference>
<dbReference type="FunFam" id="1.20.140.10:FF:000014">
    <property type="entry name" value="Cytochrome c-552"/>
    <property type="match status" value="1"/>
</dbReference>
<dbReference type="Gene3D" id="1.20.140.10">
    <property type="entry name" value="Butyryl-CoA Dehydrogenase, subunit A, domain 3"/>
    <property type="match status" value="1"/>
</dbReference>
<dbReference type="Gene3D" id="1.10.1130.10">
    <property type="entry name" value="Flavocytochrome C3, Chain A"/>
    <property type="match status" value="1"/>
</dbReference>
<dbReference type="HAMAP" id="MF_01182">
    <property type="entry name" value="Cytochrom_C552"/>
    <property type="match status" value="1"/>
</dbReference>
<dbReference type="InterPro" id="IPR003321">
    <property type="entry name" value="Cyt_c552"/>
</dbReference>
<dbReference type="InterPro" id="IPR017570">
    <property type="entry name" value="Cyt_c_NO2Rdtase_formate-dep"/>
</dbReference>
<dbReference type="InterPro" id="IPR036280">
    <property type="entry name" value="Multihaem_cyt_sf"/>
</dbReference>
<dbReference type="NCBIfam" id="TIGR03152">
    <property type="entry name" value="cyto_c552_HCOOH"/>
    <property type="match status" value="1"/>
</dbReference>
<dbReference type="NCBIfam" id="NF008339">
    <property type="entry name" value="PRK11125.1"/>
    <property type="match status" value="1"/>
</dbReference>
<dbReference type="PANTHER" id="PTHR30633:SF0">
    <property type="entry name" value="CYTOCHROME C-552"/>
    <property type="match status" value="1"/>
</dbReference>
<dbReference type="PANTHER" id="PTHR30633">
    <property type="entry name" value="CYTOCHROME C-552 RESPIRATORY NITRITE REDUCTASE"/>
    <property type="match status" value="1"/>
</dbReference>
<dbReference type="Pfam" id="PF02335">
    <property type="entry name" value="Cytochrom_C552"/>
    <property type="match status" value="1"/>
</dbReference>
<dbReference type="PIRSF" id="PIRSF000243">
    <property type="entry name" value="Cyt_c552"/>
    <property type="match status" value="1"/>
</dbReference>
<dbReference type="SUPFAM" id="SSF48695">
    <property type="entry name" value="Multiheme cytochromes"/>
    <property type="match status" value="1"/>
</dbReference>
<dbReference type="PROSITE" id="PS51008">
    <property type="entry name" value="MULTIHEME_CYTC"/>
    <property type="match status" value="1"/>
</dbReference>
<proteinExistence type="inferred from homology"/>
<comment type="function">
    <text evidence="1">Catalyzes the reduction of nitrite to ammonia, consuming six electrons in the process.</text>
</comment>
<comment type="catalytic activity">
    <reaction evidence="1">
        <text>6 Fe(III)-[cytochrome c] + NH4(+) + 2 H2O = 6 Fe(II)-[cytochrome c] + nitrite + 8 H(+)</text>
        <dbReference type="Rhea" id="RHEA:13089"/>
        <dbReference type="Rhea" id="RHEA-COMP:10350"/>
        <dbReference type="Rhea" id="RHEA-COMP:14399"/>
        <dbReference type="ChEBI" id="CHEBI:15377"/>
        <dbReference type="ChEBI" id="CHEBI:15378"/>
        <dbReference type="ChEBI" id="CHEBI:16301"/>
        <dbReference type="ChEBI" id="CHEBI:28938"/>
        <dbReference type="ChEBI" id="CHEBI:29033"/>
        <dbReference type="ChEBI" id="CHEBI:29034"/>
        <dbReference type="EC" id="1.7.2.2"/>
    </reaction>
</comment>
<comment type="cofactor">
    <cofactor evidence="1">
        <name>Ca(2+)</name>
        <dbReference type="ChEBI" id="CHEBI:29108"/>
    </cofactor>
    <text evidence="1">Binds 1 Ca(2+) ion per monomer.</text>
</comment>
<comment type="cofactor">
    <cofactor evidence="1">
        <name>heme c</name>
        <dbReference type="ChEBI" id="CHEBI:61717"/>
    </cofactor>
    <text evidence="1">Binds 5 heme c groups covalently per monomer.</text>
</comment>
<comment type="pathway">
    <text evidence="1">Nitrogen metabolism; nitrate reduction (assimilation).</text>
</comment>
<comment type="subcellular location">
    <subcellularLocation>
        <location evidence="1">Periplasm</location>
    </subcellularLocation>
</comment>
<comment type="similarity">
    <text evidence="1">Belongs to the cytochrome c-552 family.</text>
</comment>
<protein>
    <recommendedName>
        <fullName evidence="1">Cytochrome c-552</fullName>
        <ecNumber evidence="1">1.7.2.2</ecNumber>
    </recommendedName>
    <alternativeName>
        <fullName evidence="1">Ammonia-forming cytochrome c nitrite reductase</fullName>
        <shortName evidence="1">Cytochrome c nitrite reductase</shortName>
    </alternativeName>
</protein>
<sequence length="478" mass="53676">MTRIKINARRIFSLLIPFFFFTSVHAEQTAAPATPVTVEAKNETFAPQHPDQYLSWKATSEQSERVDALAEDPRLVILWAGYPFSRDYNKPRGHAFAVTDVRETLRTGAPKNAEDGPLPMACWSCKSPDVARLIQKDGEDGYFHGKWARGGPEIVNNLGCADCHNTASPEFAKGKPELTLSRPYAARAMEAIGKPFEKAGRFDQQSMVCGQCHVEYYFDGKNKAVKFPWDDGMKVENMEQYYDKIAFSDWTNSLSKTPMLKAQHPEYETWTAGIHGKNNVTCIDCHMPKVQNAEGKLYTDHKIGNPFDNFAQTCANCHTQDKAALQKVVAERKQSINDLKIKVEDQLVHAHFEAKAALDAGATEAEMKPIQDDIRHAQWRWDLAIASHGIHMHAPEEGLRMLGTAMDKAADARTKLARLLATKGITHEIQIPDISTKEKAQQAIGLNMEQIKAEKQDFIKTVIPQWEEQARKNGLLSQ</sequence>